<accession>A3N0N1</accession>
<gene>
    <name evidence="1" type="primary">pepE</name>
    <name type="ordered locus">APL_0871</name>
</gene>
<comment type="function">
    <text evidence="1">Hydrolyzes dipeptides containing N-terminal aspartate residues. May play a role in allowing the cell to use peptide aspartate to spare carbon otherwise required for the synthesis of the aspartate family of amino acids.</text>
</comment>
<comment type="catalytic activity">
    <reaction evidence="1">
        <text>Dipeptidase E catalyzes the hydrolysis of dipeptides Asp-|-Xaa. It does not act on peptides with N-terminal Glu, Asn or Gln, nor does it cleave isoaspartyl peptides.</text>
        <dbReference type="EC" id="3.4.13.21"/>
    </reaction>
</comment>
<comment type="subcellular location">
    <subcellularLocation>
        <location evidence="1">Cytoplasm</location>
    </subcellularLocation>
</comment>
<comment type="similarity">
    <text evidence="1">Belongs to the peptidase S51 family.</text>
</comment>
<organism>
    <name type="scientific">Actinobacillus pleuropneumoniae serotype 5b (strain L20)</name>
    <dbReference type="NCBI Taxonomy" id="416269"/>
    <lineage>
        <taxon>Bacteria</taxon>
        <taxon>Pseudomonadati</taxon>
        <taxon>Pseudomonadota</taxon>
        <taxon>Gammaproteobacteria</taxon>
        <taxon>Pasteurellales</taxon>
        <taxon>Pasteurellaceae</taxon>
        <taxon>Actinobacillus</taxon>
    </lineage>
</organism>
<proteinExistence type="inferred from homology"/>
<protein>
    <recommendedName>
        <fullName evidence="1">Peptidase E</fullName>
        <ecNumber evidence="1">3.4.13.21</ecNumber>
    </recommendedName>
    <alternativeName>
        <fullName evidence="1">Alpha-aspartyl dipeptidase</fullName>
    </alternativeName>
    <alternativeName>
        <fullName evidence="1">Asp-specific dipeptidase</fullName>
    </alternativeName>
    <alternativeName>
        <fullName evidence="1">Dipeptidase E</fullName>
    </alternativeName>
</protein>
<keyword id="KW-0963">Cytoplasm</keyword>
<keyword id="KW-0224">Dipeptidase</keyword>
<keyword id="KW-0378">Hydrolase</keyword>
<keyword id="KW-0645">Protease</keyword>
<keyword id="KW-1185">Reference proteome</keyword>
<keyword id="KW-0720">Serine protease</keyword>
<evidence type="ECO:0000255" key="1">
    <source>
        <dbReference type="HAMAP-Rule" id="MF_00510"/>
    </source>
</evidence>
<name>PEPE_ACTP2</name>
<reference key="1">
    <citation type="journal article" date="2008" name="J. Bacteriol.">
        <title>The complete genome sequence of Actinobacillus pleuropneumoniae L20 (serotype 5b).</title>
        <authorList>
            <person name="Foote S.J."/>
            <person name="Bosse J.T."/>
            <person name="Bouevitch A.B."/>
            <person name="Langford P.R."/>
            <person name="Young N.M."/>
            <person name="Nash J.H.E."/>
        </authorList>
    </citation>
    <scope>NUCLEOTIDE SEQUENCE [LARGE SCALE GENOMIC DNA]</scope>
    <source>
        <strain>L20</strain>
    </source>
</reference>
<dbReference type="EC" id="3.4.13.21" evidence="1"/>
<dbReference type="EMBL" id="CP000569">
    <property type="protein sequence ID" value="ABN73967.1"/>
    <property type="molecule type" value="Genomic_DNA"/>
</dbReference>
<dbReference type="RefSeq" id="WP_005612204.1">
    <property type="nucleotide sequence ID" value="NC_009053.1"/>
</dbReference>
<dbReference type="SMR" id="A3N0N1"/>
<dbReference type="STRING" id="416269.APL_0871"/>
<dbReference type="MEROPS" id="S51.001"/>
<dbReference type="EnsemblBacteria" id="ABN73967">
    <property type="protein sequence ID" value="ABN73967"/>
    <property type="gene ID" value="APL_0871"/>
</dbReference>
<dbReference type="KEGG" id="apl:APL_0871"/>
<dbReference type="eggNOG" id="COG3340">
    <property type="taxonomic scope" value="Bacteria"/>
</dbReference>
<dbReference type="HOGENOM" id="CLU_071689_0_0_6"/>
<dbReference type="Proteomes" id="UP000001432">
    <property type="component" value="Chromosome"/>
</dbReference>
<dbReference type="GO" id="GO:0005737">
    <property type="term" value="C:cytoplasm"/>
    <property type="evidence" value="ECO:0007669"/>
    <property type="project" value="UniProtKB-SubCell"/>
</dbReference>
<dbReference type="GO" id="GO:0016805">
    <property type="term" value="F:dipeptidase activity"/>
    <property type="evidence" value="ECO:0007669"/>
    <property type="project" value="UniProtKB-UniRule"/>
</dbReference>
<dbReference type="GO" id="GO:0008236">
    <property type="term" value="F:serine-type peptidase activity"/>
    <property type="evidence" value="ECO:0007669"/>
    <property type="project" value="UniProtKB-KW"/>
</dbReference>
<dbReference type="GO" id="GO:0006508">
    <property type="term" value="P:proteolysis"/>
    <property type="evidence" value="ECO:0007669"/>
    <property type="project" value="UniProtKB-UniRule"/>
</dbReference>
<dbReference type="CDD" id="cd03146">
    <property type="entry name" value="GAT1_Peptidase_E"/>
    <property type="match status" value="1"/>
</dbReference>
<dbReference type="FunFam" id="3.40.50.880:FF:000007">
    <property type="entry name" value="Peptidase E"/>
    <property type="match status" value="1"/>
</dbReference>
<dbReference type="Gene3D" id="3.40.50.880">
    <property type="match status" value="1"/>
</dbReference>
<dbReference type="HAMAP" id="MF_00510">
    <property type="entry name" value="Peptidase_E"/>
    <property type="match status" value="1"/>
</dbReference>
<dbReference type="InterPro" id="IPR029062">
    <property type="entry name" value="Class_I_gatase-like"/>
</dbReference>
<dbReference type="InterPro" id="IPR005320">
    <property type="entry name" value="Peptidase_S51"/>
</dbReference>
<dbReference type="InterPro" id="IPR023172">
    <property type="entry name" value="Peptidase_S51_dipeptidase-E"/>
</dbReference>
<dbReference type="NCBIfam" id="NF003642">
    <property type="entry name" value="PRK05282.1"/>
    <property type="match status" value="1"/>
</dbReference>
<dbReference type="PANTHER" id="PTHR20842:SF0">
    <property type="entry name" value="ALPHA-ASPARTYL DIPEPTIDASE"/>
    <property type="match status" value="1"/>
</dbReference>
<dbReference type="PANTHER" id="PTHR20842">
    <property type="entry name" value="PROTEASE S51 ALPHA-ASPARTYL DIPEPTIDASE"/>
    <property type="match status" value="1"/>
</dbReference>
<dbReference type="Pfam" id="PF03575">
    <property type="entry name" value="Peptidase_S51"/>
    <property type="match status" value="1"/>
</dbReference>
<dbReference type="SUPFAM" id="SSF52317">
    <property type="entry name" value="Class I glutamine amidotransferase-like"/>
    <property type="match status" value="1"/>
</dbReference>
<sequence length="234" mass="26125">MKNMLLMSGSKYKDTAYLVHTLPWLAQFLADYKGKKVAFVPYAGVRRSFDEYETTVKNALQSLELEIVSVHRGKQHRDIIEQADVIAIGGGNTFCLLKQMYEHDLLDAIRAKVNSGTPYFGWSAGANVAGSSIMTTNDMPITYPPSFNALNLFPHQINPHFISGKMQGHNGESREERLEEFLIVNPQSLVYAMPEGTALHIQGEQATVLGAQDILCFSEKMQLDTKAVNSTFNY</sequence>
<feature type="chain" id="PRO_1000050609" description="Peptidase E">
    <location>
        <begin position="1"/>
        <end position="234"/>
    </location>
</feature>
<feature type="active site" description="Charge relay system" evidence="1">
    <location>
        <position position="123"/>
    </location>
</feature>
<feature type="active site" description="Charge relay system" evidence="1">
    <location>
        <position position="138"/>
    </location>
</feature>
<feature type="active site" description="Charge relay system" evidence="1">
    <location>
        <position position="160"/>
    </location>
</feature>